<feature type="chain" id="PRO_1000044782" description="Uronate isomerase">
    <location>
        <begin position="1"/>
        <end position="471"/>
    </location>
</feature>
<evidence type="ECO:0000255" key="1">
    <source>
        <dbReference type="HAMAP-Rule" id="MF_00675"/>
    </source>
</evidence>
<name>UXAC_XANC8</name>
<protein>
    <recommendedName>
        <fullName evidence="1">Uronate isomerase</fullName>
        <ecNumber evidence="1">5.3.1.12</ecNumber>
    </recommendedName>
    <alternativeName>
        <fullName evidence="1">Glucuronate isomerase</fullName>
    </alternativeName>
    <alternativeName>
        <fullName evidence="1">Uronic isomerase</fullName>
    </alternativeName>
</protein>
<keyword id="KW-0413">Isomerase</keyword>
<proteinExistence type="inferred from homology"/>
<reference key="1">
    <citation type="journal article" date="2005" name="Genome Res.">
        <title>Comparative and functional genomic analyses of the pathogenicity of phytopathogen Xanthomonas campestris pv. campestris.</title>
        <authorList>
            <person name="Qian W."/>
            <person name="Jia Y."/>
            <person name="Ren S.-X."/>
            <person name="He Y.-Q."/>
            <person name="Feng J.-X."/>
            <person name="Lu L.-F."/>
            <person name="Sun Q."/>
            <person name="Ying G."/>
            <person name="Tang D.-J."/>
            <person name="Tang H."/>
            <person name="Wu W."/>
            <person name="Hao P."/>
            <person name="Wang L."/>
            <person name="Jiang B.-L."/>
            <person name="Zeng S."/>
            <person name="Gu W.-Y."/>
            <person name="Lu G."/>
            <person name="Rong L."/>
            <person name="Tian Y."/>
            <person name="Yao Z."/>
            <person name="Fu G."/>
            <person name="Chen B."/>
            <person name="Fang R."/>
            <person name="Qiang B."/>
            <person name="Chen Z."/>
            <person name="Zhao G.-P."/>
            <person name="Tang J.-L."/>
            <person name="He C."/>
        </authorList>
    </citation>
    <scope>NUCLEOTIDE SEQUENCE [LARGE SCALE GENOMIC DNA]</scope>
    <source>
        <strain>8004</strain>
    </source>
</reference>
<comment type="catalytic activity">
    <reaction evidence="1">
        <text>D-glucuronate = D-fructuronate</text>
        <dbReference type="Rhea" id="RHEA:13049"/>
        <dbReference type="ChEBI" id="CHEBI:58720"/>
        <dbReference type="ChEBI" id="CHEBI:59863"/>
        <dbReference type="EC" id="5.3.1.12"/>
    </reaction>
</comment>
<comment type="catalytic activity">
    <reaction evidence="1">
        <text>aldehydo-D-galacturonate = keto-D-tagaturonate</text>
        <dbReference type="Rhea" id="RHEA:27702"/>
        <dbReference type="ChEBI" id="CHEBI:12952"/>
        <dbReference type="ChEBI" id="CHEBI:17886"/>
        <dbReference type="EC" id="5.3.1.12"/>
    </reaction>
</comment>
<comment type="pathway">
    <text evidence="1">Carbohydrate metabolism; pentose and glucuronate interconversion.</text>
</comment>
<comment type="similarity">
    <text evidence="1">Belongs to the metallo-dependent hydrolases superfamily. Uronate isomerase family.</text>
</comment>
<dbReference type="EC" id="5.3.1.12" evidence="1"/>
<dbReference type="EMBL" id="CP000050">
    <property type="protein sequence ID" value="AAY51247.1"/>
    <property type="molecule type" value="Genomic_DNA"/>
</dbReference>
<dbReference type="RefSeq" id="WP_011039186.1">
    <property type="nucleotide sequence ID" value="NZ_CP155948.1"/>
</dbReference>
<dbReference type="SMR" id="Q4UNX6"/>
<dbReference type="KEGG" id="xcb:XC_4209"/>
<dbReference type="HOGENOM" id="CLU_044465_0_0_6"/>
<dbReference type="UniPathway" id="UPA00246"/>
<dbReference type="Proteomes" id="UP000000420">
    <property type="component" value="Chromosome"/>
</dbReference>
<dbReference type="GO" id="GO:0008880">
    <property type="term" value="F:glucuronate isomerase activity"/>
    <property type="evidence" value="ECO:0007669"/>
    <property type="project" value="UniProtKB-UniRule"/>
</dbReference>
<dbReference type="GO" id="GO:0019698">
    <property type="term" value="P:D-galacturonate catabolic process"/>
    <property type="evidence" value="ECO:0007669"/>
    <property type="project" value="TreeGrafter"/>
</dbReference>
<dbReference type="GO" id="GO:0042840">
    <property type="term" value="P:D-glucuronate catabolic process"/>
    <property type="evidence" value="ECO:0007669"/>
    <property type="project" value="TreeGrafter"/>
</dbReference>
<dbReference type="Gene3D" id="3.20.20.140">
    <property type="entry name" value="Metal-dependent hydrolases"/>
    <property type="match status" value="1"/>
</dbReference>
<dbReference type="Gene3D" id="1.10.2020.10">
    <property type="entry name" value="uronate isomerase, domain 2, chain A"/>
    <property type="match status" value="1"/>
</dbReference>
<dbReference type="HAMAP" id="MF_00675">
    <property type="entry name" value="UxaC"/>
    <property type="match status" value="1"/>
</dbReference>
<dbReference type="InterPro" id="IPR032466">
    <property type="entry name" value="Metal_Hydrolase"/>
</dbReference>
<dbReference type="InterPro" id="IPR003766">
    <property type="entry name" value="Uronate_isomerase"/>
</dbReference>
<dbReference type="NCBIfam" id="NF002794">
    <property type="entry name" value="PRK02925.1"/>
    <property type="match status" value="1"/>
</dbReference>
<dbReference type="PANTHER" id="PTHR30068">
    <property type="entry name" value="URONATE ISOMERASE"/>
    <property type="match status" value="1"/>
</dbReference>
<dbReference type="PANTHER" id="PTHR30068:SF4">
    <property type="entry name" value="URONATE ISOMERASE"/>
    <property type="match status" value="1"/>
</dbReference>
<dbReference type="Pfam" id="PF02614">
    <property type="entry name" value="UxaC"/>
    <property type="match status" value="1"/>
</dbReference>
<dbReference type="SUPFAM" id="SSF51556">
    <property type="entry name" value="Metallo-dependent hydrolases"/>
    <property type="match status" value="1"/>
</dbReference>
<organism>
    <name type="scientific">Xanthomonas campestris pv. campestris (strain 8004)</name>
    <dbReference type="NCBI Taxonomy" id="314565"/>
    <lineage>
        <taxon>Bacteria</taxon>
        <taxon>Pseudomonadati</taxon>
        <taxon>Pseudomonadota</taxon>
        <taxon>Gammaproteobacteria</taxon>
        <taxon>Lysobacterales</taxon>
        <taxon>Lysobacteraceae</taxon>
        <taxon>Xanthomonas</taxon>
    </lineage>
</organism>
<sequence>MPTPLILHDDRLLPADPATRAIARRLYAQTAALPIISPHGHTDPAWFATDAPFANATELLLVPDHYVFRMLYSQGIDLDQLGIPHADGSRAPVDPREAWRVFASQFALLRGTPSALWLNHVFHQVFDLRIRLDAGSADHYYDHITAALQTPAFRPRALFERFNIEVIATTESPLDTLEHHATIRDSGWTGRVLTAYRPDAVVDPEHEQFASALQQFAALTGEDVMQWPGYLCAHRQRRAFFAAAGATSTDHGHPSAATADLSPAEAQRLFDTVVRGQATPAQAELFRAQVLTEMAAMSVDDGLVMQLHPGCFRNHNRQLFERYGRDKGADIPMRTDYVHALKPLLDRFGNDPRFRLIVFTLDETSYSRELAPLAGHYPALLLGPAWWFHDAPEGMWRFREQTLASAGFYNTVGFNDDTRAFLSIPARHDVARRVDSAFLAKLVAEHRLDEDEAMEVAIDLAYRLPKQAYKL</sequence>
<accession>Q4UNX6</accession>
<gene>
    <name evidence="1" type="primary">uxaC</name>
    <name type="ordered locus">XC_4209</name>
</gene>